<protein>
    <recommendedName>
        <fullName evidence="1">Aspartate--tRNA ligase</fullName>
        <ecNumber evidence="1">6.1.1.12</ecNumber>
    </recommendedName>
    <alternativeName>
        <fullName evidence="1">Aspartyl-tRNA synthetase</fullName>
        <shortName evidence="1">AspRS</shortName>
    </alternativeName>
</protein>
<sequence length="590" mass="65785">MRTEYCGQLRLSHVGQQVTLCGWVNRRRDLGSLIFIDMRDREGIVQVFFDPDRADALKLASELRNEFCIQVTGTVRARDEKNINRDMATGEIEVLASSLTIINRADVLPLDSNHVNTEEARLKYRYLDLRRPEMAQRLKTRAKITSLVRRFMDDHGFLDIETPMLTKATPEGARDYLVPSRVHKGKFYALPQSPQLFKQLLMMSGFDRYYQIVKCFRDEDLRADRQPEFTQIDVETSFMTAPQVREVMEALVRHLWLEVKGVDLGDFPVMTFAEAERRYGSDKPDLRNPMELTDVADLLKSVEFAVFAGPANDPKGRVAALRVPGGASLTRKQIDEYGNFVKIYGAKGLAYIKVNERAKGLEGINSPVAKFLSAEIIEAILDRTAAQDGDMIFFGADNKKIVADGMGALLLKVGKDLGLTDESKWAPLWVIDFPMFEDDGEGGLTAMHHPFTSPKDMTAAELKAAPENAVANAYDMVINGYEVGGGSVRIHNGDMQQTVFGILGINEEEQREKFGFLLDALKYGTPPHAGLAFGLDRLTMLLTGTDNIRDVIAFPKTTAAACLMTEAPSFANPTALAELSIQVVKKAENN</sequence>
<accession>Q0T3U0</accession>
<name>SYD_SHIF8</name>
<feature type="chain" id="PRO_1000006763" description="Aspartate--tRNA ligase">
    <location>
        <begin position="1"/>
        <end position="590"/>
    </location>
</feature>
<feature type="region of interest" description="Aspartate" evidence="1">
    <location>
        <begin position="195"/>
        <end position="198"/>
    </location>
</feature>
<feature type="binding site" evidence="1">
    <location>
        <position position="171"/>
    </location>
    <ligand>
        <name>L-aspartate</name>
        <dbReference type="ChEBI" id="CHEBI:29991"/>
    </ligand>
</feature>
<feature type="binding site" evidence="1">
    <location>
        <begin position="217"/>
        <end position="219"/>
    </location>
    <ligand>
        <name>ATP</name>
        <dbReference type="ChEBI" id="CHEBI:30616"/>
    </ligand>
</feature>
<feature type="binding site" evidence="1">
    <location>
        <position position="217"/>
    </location>
    <ligand>
        <name>L-aspartate</name>
        <dbReference type="ChEBI" id="CHEBI:29991"/>
    </ligand>
</feature>
<feature type="binding site" evidence="1">
    <location>
        <position position="226"/>
    </location>
    <ligand>
        <name>ATP</name>
        <dbReference type="ChEBI" id="CHEBI:30616"/>
    </ligand>
</feature>
<feature type="binding site" evidence="1">
    <location>
        <position position="448"/>
    </location>
    <ligand>
        <name>L-aspartate</name>
        <dbReference type="ChEBI" id="CHEBI:29991"/>
    </ligand>
</feature>
<feature type="binding site" evidence="1">
    <location>
        <position position="482"/>
    </location>
    <ligand>
        <name>ATP</name>
        <dbReference type="ChEBI" id="CHEBI:30616"/>
    </ligand>
</feature>
<feature type="binding site" evidence="1">
    <location>
        <position position="489"/>
    </location>
    <ligand>
        <name>L-aspartate</name>
        <dbReference type="ChEBI" id="CHEBI:29991"/>
    </ligand>
</feature>
<feature type="binding site" evidence="1">
    <location>
        <begin position="534"/>
        <end position="537"/>
    </location>
    <ligand>
        <name>ATP</name>
        <dbReference type="ChEBI" id="CHEBI:30616"/>
    </ligand>
</feature>
<gene>
    <name evidence="1" type="primary">aspS</name>
    <name type="ordered locus">SFV_1868</name>
</gene>
<evidence type="ECO:0000255" key="1">
    <source>
        <dbReference type="HAMAP-Rule" id="MF_00044"/>
    </source>
</evidence>
<organism>
    <name type="scientific">Shigella flexneri serotype 5b (strain 8401)</name>
    <dbReference type="NCBI Taxonomy" id="373384"/>
    <lineage>
        <taxon>Bacteria</taxon>
        <taxon>Pseudomonadati</taxon>
        <taxon>Pseudomonadota</taxon>
        <taxon>Gammaproteobacteria</taxon>
        <taxon>Enterobacterales</taxon>
        <taxon>Enterobacteriaceae</taxon>
        <taxon>Shigella</taxon>
    </lineage>
</organism>
<reference key="1">
    <citation type="journal article" date="2006" name="BMC Genomics">
        <title>Complete genome sequence of Shigella flexneri 5b and comparison with Shigella flexneri 2a.</title>
        <authorList>
            <person name="Nie H."/>
            <person name="Yang F."/>
            <person name="Zhang X."/>
            <person name="Yang J."/>
            <person name="Chen L."/>
            <person name="Wang J."/>
            <person name="Xiong Z."/>
            <person name="Peng J."/>
            <person name="Sun L."/>
            <person name="Dong J."/>
            <person name="Xue Y."/>
            <person name="Xu X."/>
            <person name="Chen S."/>
            <person name="Yao Z."/>
            <person name="Shen Y."/>
            <person name="Jin Q."/>
        </authorList>
    </citation>
    <scope>NUCLEOTIDE SEQUENCE [LARGE SCALE GENOMIC DNA]</scope>
    <source>
        <strain>8401</strain>
    </source>
</reference>
<dbReference type="EC" id="6.1.1.12" evidence="1"/>
<dbReference type="EMBL" id="CP000266">
    <property type="protein sequence ID" value="ABF04025.1"/>
    <property type="molecule type" value="Genomic_DNA"/>
</dbReference>
<dbReference type="RefSeq" id="WP_001258679.1">
    <property type="nucleotide sequence ID" value="NC_008258.1"/>
</dbReference>
<dbReference type="SMR" id="Q0T3U0"/>
<dbReference type="KEGG" id="sfv:SFV_1868"/>
<dbReference type="HOGENOM" id="CLU_014330_3_2_6"/>
<dbReference type="Proteomes" id="UP000000659">
    <property type="component" value="Chromosome"/>
</dbReference>
<dbReference type="GO" id="GO:0005737">
    <property type="term" value="C:cytoplasm"/>
    <property type="evidence" value="ECO:0007669"/>
    <property type="project" value="UniProtKB-SubCell"/>
</dbReference>
<dbReference type="GO" id="GO:0004815">
    <property type="term" value="F:aspartate-tRNA ligase activity"/>
    <property type="evidence" value="ECO:0007669"/>
    <property type="project" value="UniProtKB-UniRule"/>
</dbReference>
<dbReference type="GO" id="GO:0005524">
    <property type="term" value="F:ATP binding"/>
    <property type="evidence" value="ECO:0007669"/>
    <property type="project" value="UniProtKB-UniRule"/>
</dbReference>
<dbReference type="GO" id="GO:0003676">
    <property type="term" value="F:nucleic acid binding"/>
    <property type="evidence" value="ECO:0007669"/>
    <property type="project" value="InterPro"/>
</dbReference>
<dbReference type="GO" id="GO:0006422">
    <property type="term" value="P:aspartyl-tRNA aminoacylation"/>
    <property type="evidence" value="ECO:0007669"/>
    <property type="project" value="UniProtKB-UniRule"/>
</dbReference>
<dbReference type="CDD" id="cd00777">
    <property type="entry name" value="AspRS_core"/>
    <property type="match status" value="1"/>
</dbReference>
<dbReference type="CDD" id="cd04317">
    <property type="entry name" value="EcAspRS_like_N"/>
    <property type="match status" value="1"/>
</dbReference>
<dbReference type="FunFam" id="2.40.50.140:FF:000080">
    <property type="entry name" value="Aspartate--tRNA ligase"/>
    <property type="match status" value="1"/>
</dbReference>
<dbReference type="FunFam" id="3.30.1360.30:FF:000001">
    <property type="entry name" value="Aspartate--tRNA ligase"/>
    <property type="match status" value="1"/>
</dbReference>
<dbReference type="Gene3D" id="3.30.930.10">
    <property type="entry name" value="Bira Bifunctional Protein, Domain 2"/>
    <property type="match status" value="1"/>
</dbReference>
<dbReference type="Gene3D" id="3.30.1360.30">
    <property type="entry name" value="GAD-like domain"/>
    <property type="match status" value="1"/>
</dbReference>
<dbReference type="Gene3D" id="2.40.50.140">
    <property type="entry name" value="Nucleic acid-binding proteins"/>
    <property type="match status" value="1"/>
</dbReference>
<dbReference type="HAMAP" id="MF_00044">
    <property type="entry name" value="Asp_tRNA_synth_type1"/>
    <property type="match status" value="1"/>
</dbReference>
<dbReference type="InterPro" id="IPR004364">
    <property type="entry name" value="Aa-tRNA-synt_II"/>
</dbReference>
<dbReference type="InterPro" id="IPR006195">
    <property type="entry name" value="aa-tRNA-synth_II"/>
</dbReference>
<dbReference type="InterPro" id="IPR045864">
    <property type="entry name" value="aa-tRNA-synth_II/BPL/LPL"/>
</dbReference>
<dbReference type="InterPro" id="IPR004524">
    <property type="entry name" value="Asp-tRNA-ligase_1"/>
</dbReference>
<dbReference type="InterPro" id="IPR047089">
    <property type="entry name" value="Asp-tRNA-ligase_1_N"/>
</dbReference>
<dbReference type="InterPro" id="IPR002312">
    <property type="entry name" value="Asp/Asn-tRNA-synth_IIb"/>
</dbReference>
<dbReference type="InterPro" id="IPR047090">
    <property type="entry name" value="AspRS_core"/>
</dbReference>
<dbReference type="InterPro" id="IPR004115">
    <property type="entry name" value="GAD-like_sf"/>
</dbReference>
<dbReference type="InterPro" id="IPR029351">
    <property type="entry name" value="GAD_dom"/>
</dbReference>
<dbReference type="InterPro" id="IPR012340">
    <property type="entry name" value="NA-bd_OB-fold"/>
</dbReference>
<dbReference type="InterPro" id="IPR004365">
    <property type="entry name" value="NA-bd_OB_tRNA"/>
</dbReference>
<dbReference type="NCBIfam" id="TIGR00459">
    <property type="entry name" value="aspS_bact"/>
    <property type="match status" value="1"/>
</dbReference>
<dbReference type="NCBIfam" id="NF001750">
    <property type="entry name" value="PRK00476.1"/>
    <property type="match status" value="1"/>
</dbReference>
<dbReference type="PANTHER" id="PTHR22594:SF5">
    <property type="entry name" value="ASPARTATE--TRNA LIGASE, MITOCHONDRIAL"/>
    <property type="match status" value="1"/>
</dbReference>
<dbReference type="PANTHER" id="PTHR22594">
    <property type="entry name" value="ASPARTYL/LYSYL-TRNA SYNTHETASE"/>
    <property type="match status" value="1"/>
</dbReference>
<dbReference type="Pfam" id="PF02938">
    <property type="entry name" value="GAD"/>
    <property type="match status" value="1"/>
</dbReference>
<dbReference type="Pfam" id="PF00152">
    <property type="entry name" value="tRNA-synt_2"/>
    <property type="match status" value="1"/>
</dbReference>
<dbReference type="Pfam" id="PF01336">
    <property type="entry name" value="tRNA_anti-codon"/>
    <property type="match status" value="1"/>
</dbReference>
<dbReference type="PRINTS" id="PR01042">
    <property type="entry name" value="TRNASYNTHASP"/>
</dbReference>
<dbReference type="SUPFAM" id="SSF55681">
    <property type="entry name" value="Class II aaRS and biotin synthetases"/>
    <property type="match status" value="1"/>
</dbReference>
<dbReference type="SUPFAM" id="SSF55261">
    <property type="entry name" value="GAD domain-like"/>
    <property type="match status" value="1"/>
</dbReference>
<dbReference type="SUPFAM" id="SSF50249">
    <property type="entry name" value="Nucleic acid-binding proteins"/>
    <property type="match status" value="1"/>
</dbReference>
<dbReference type="PROSITE" id="PS50862">
    <property type="entry name" value="AA_TRNA_LIGASE_II"/>
    <property type="match status" value="1"/>
</dbReference>
<keyword id="KW-0030">Aminoacyl-tRNA synthetase</keyword>
<keyword id="KW-0067">ATP-binding</keyword>
<keyword id="KW-0963">Cytoplasm</keyword>
<keyword id="KW-0436">Ligase</keyword>
<keyword id="KW-0547">Nucleotide-binding</keyword>
<keyword id="KW-0648">Protein biosynthesis</keyword>
<proteinExistence type="inferred from homology"/>
<comment type="function">
    <text evidence="1">Catalyzes the attachment of L-aspartate to tRNA(Asp) in a two-step reaction: L-aspartate is first activated by ATP to form Asp-AMP and then transferred to the acceptor end of tRNA(Asp).</text>
</comment>
<comment type="catalytic activity">
    <reaction evidence="1">
        <text>tRNA(Asp) + L-aspartate + ATP = L-aspartyl-tRNA(Asp) + AMP + diphosphate</text>
        <dbReference type="Rhea" id="RHEA:19649"/>
        <dbReference type="Rhea" id="RHEA-COMP:9660"/>
        <dbReference type="Rhea" id="RHEA-COMP:9678"/>
        <dbReference type="ChEBI" id="CHEBI:29991"/>
        <dbReference type="ChEBI" id="CHEBI:30616"/>
        <dbReference type="ChEBI" id="CHEBI:33019"/>
        <dbReference type="ChEBI" id="CHEBI:78442"/>
        <dbReference type="ChEBI" id="CHEBI:78516"/>
        <dbReference type="ChEBI" id="CHEBI:456215"/>
        <dbReference type="EC" id="6.1.1.12"/>
    </reaction>
</comment>
<comment type="subunit">
    <text evidence="1">Homodimer.</text>
</comment>
<comment type="subcellular location">
    <subcellularLocation>
        <location evidence="1">Cytoplasm</location>
    </subcellularLocation>
</comment>
<comment type="similarity">
    <text evidence="1">Belongs to the class-II aminoacyl-tRNA synthetase family. Type 1 subfamily.</text>
</comment>